<proteinExistence type="inferred from homology"/>
<comment type="subcellular location">
    <subcellularLocation>
        <location>Plastid</location>
        <location>Chloroplast</location>
    </subcellularLocation>
</comment>
<comment type="similarity">
    <text evidence="1">Belongs to the ycf70 family.</text>
</comment>
<organism>
    <name type="scientific">Oryza sativa subsp. japonica</name>
    <name type="common">Rice</name>
    <dbReference type="NCBI Taxonomy" id="39947"/>
    <lineage>
        <taxon>Eukaryota</taxon>
        <taxon>Viridiplantae</taxon>
        <taxon>Streptophyta</taxon>
        <taxon>Embryophyta</taxon>
        <taxon>Tracheophyta</taxon>
        <taxon>Spermatophyta</taxon>
        <taxon>Magnoliopsida</taxon>
        <taxon>Liliopsida</taxon>
        <taxon>Poales</taxon>
        <taxon>Poaceae</taxon>
        <taxon>BOP clade</taxon>
        <taxon>Oryzoideae</taxon>
        <taxon>Oryzeae</taxon>
        <taxon>Oryzinae</taxon>
        <taxon>Oryza</taxon>
        <taxon>Oryza sativa</taxon>
    </lineage>
</organism>
<name>YCF70_ORYSJ</name>
<sequence>MVYGYGKSNMPHPNRKRKGTDTQYDYWEELLVMVSGLYVLFCVFLVLFIFFDSFKQESNKLELSGKEEKKKLNGENRLSRDIQNLLYIK</sequence>
<evidence type="ECO:0000305" key="1"/>
<protein>
    <recommendedName>
        <fullName>Uncharacterized protein ycf70</fullName>
    </recommendedName>
    <alternativeName>
        <fullName>ORF89</fullName>
    </alternativeName>
</protein>
<geneLocation type="chloroplast"/>
<gene>
    <name type="primary">ycf70</name>
    <name type="ordered locus">LOC_Osp1g00200</name>
</gene>
<keyword id="KW-0150">Chloroplast</keyword>
<keyword id="KW-0934">Plastid</keyword>
<keyword id="KW-1185">Reference proteome</keyword>
<feature type="chain" id="PRO_0000217401" description="Uncharacterized protein ycf70">
    <location>
        <begin position="1"/>
        <end position="89"/>
    </location>
</feature>
<dbReference type="EMBL" id="X15901">
    <property type="protein sequence ID" value="CAA33982.1"/>
    <property type="molecule type" value="Genomic_DNA"/>
</dbReference>
<dbReference type="EMBL" id="AY522330">
    <property type="status" value="NOT_ANNOTATED_CDS"/>
    <property type="molecule type" value="Genomic_DNA"/>
</dbReference>
<dbReference type="PIR" id="JQ0209">
    <property type="entry name" value="JQ0209"/>
</dbReference>
<dbReference type="RefSeq" id="NP_039369.1">
    <property type="nucleotide sequence ID" value="NC_001320.1"/>
</dbReference>
<dbReference type="FunCoup" id="Q32759">
    <property type="interactions" value="743"/>
</dbReference>
<dbReference type="PaxDb" id="39947-Q32759"/>
<dbReference type="KEGG" id="dosa:CAA33982.1"/>
<dbReference type="KEGG" id="osa:3131453"/>
<dbReference type="InParanoid" id="Q32759"/>
<dbReference type="Proteomes" id="UP000059680">
    <property type="component" value="Chloroplast"/>
</dbReference>
<dbReference type="GO" id="GO:0009507">
    <property type="term" value="C:chloroplast"/>
    <property type="evidence" value="ECO:0007669"/>
    <property type="project" value="UniProtKB-SubCell"/>
</dbReference>
<dbReference type="GO" id="GO:0009536">
    <property type="term" value="C:plastid"/>
    <property type="evidence" value="ECO:0000250"/>
    <property type="project" value="Gramene"/>
</dbReference>
<dbReference type="InterPro" id="IPR035337">
    <property type="entry name" value="Ycf70-like"/>
</dbReference>
<dbReference type="Pfam" id="PF17382">
    <property type="entry name" value="Ycf70"/>
    <property type="match status" value="1"/>
</dbReference>
<reference key="1">
    <citation type="journal article" date="1989" name="Mol. Gen. Genet.">
        <title>The complete sequence of the rice (Oryza sativa) chloroplast genome: intermolecular recombination between distinct tRNA genes accounts for a major plastid DNA inversion during the evolution of the cereals.</title>
        <authorList>
            <person name="Hiratsuka J."/>
            <person name="Shimada H."/>
            <person name="Whittier R."/>
            <person name="Ishibashi T."/>
            <person name="Sakamoto M."/>
            <person name="Mori M."/>
            <person name="Kondo C."/>
            <person name="Honji Y."/>
            <person name="Sun C.-R."/>
            <person name="Meng B.-Y."/>
            <person name="Li Y.-Q."/>
            <person name="Kanno A."/>
            <person name="Nishizawa Y."/>
            <person name="Hirai A."/>
            <person name="Shinozaki K."/>
            <person name="Sugiura M."/>
        </authorList>
    </citation>
    <scope>NUCLEOTIDE SEQUENCE [LARGE SCALE GENOMIC DNA]</scope>
    <source>
        <strain>cv. Nipponbare</strain>
    </source>
</reference>
<reference key="2">
    <citation type="journal article" date="2004" name="Plant Physiol.">
        <title>A comparison of rice chloroplast genomes.</title>
        <authorList>
            <person name="Tang J."/>
            <person name="Xia H."/>
            <person name="Cao M."/>
            <person name="Zhang X."/>
            <person name="Zeng W."/>
            <person name="Hu S."/>
            <person name="Tong W."/>
            <person name="Wang J."/>
            <person name="Wang J."/>
            <person name="Yu J."/>
            <person name="Yang H."/>
            <person name="Zhu L."/>
        </authorList>
    </citation>
    <scope>NUCLEOTIDE SEQUENCE [LARGE SCALE GENOMIC DNA]</scope>
    <source>
        <strain>cv. Nipponbare</strain>
    </source>
</reference>
<accession>Q32759</accession>